<protein>
    <recommendedName>
        <fullName evidence="1">Ribosome maturation factor RimP</fullName>
    </recommendedName>
</protein>
<comment type="function">
    <text evidence="1">Required for maturation of 30S ribosomal subunits.</text>
</comment>
<comment type="subcellular location">
    <subcellularLocation>
        <location evidence="1">Cytoplasm</location>
    </subcellularLocation>
</comment>
<comment type="similarity">
    <text evidence="1">Belongs to the RimP family.</text>
</comment>
<gene>
    <name evidence="1" type="primary">rimP</name>
    <name type="ordered locus">TP_0893</name>
</gene>
<organism>
    <name type="scientific">Treponema pallidum (strain Nichols)</name>
    <dbReference type="NCBI Taxonomy" id="243276"/>
    <lineage>
        <taxon>Bacteria</taxon>
        <taxon>Pseudomonadati</taxon>
        <taxon>Spirochaetota</taxon>
        <taxon>Spirochaetia</taxon>
        <taxon>Spirochaetales</taxon>
        <taxon>Treponemataceae</taxon>
        <taxon>Treponema</taxon>
    </lineage>
</organism>
<proteinExistence type="inferred from homology"/>
<keyword id="KW-0963">Cytoplasm</keyword>
<keyword id="KW-1185">Reference proteome</keyword>
<keyword id="KW-0690">Ribosome biogenesis</keyword>
<name>RIMP_TREPA</name>
<evidence type="ECO:0000255" key="1">
    <source>
        <dbReference type="HAMAP-Rule" id="MF_01077"/>
    </source>
</evidence>
<dbReference type="EMBL" id="AE000520">
    <property type="protein sequence ID" value="AAC65850.1"/>
    <property type="molecule type" value="Genomic_DNA"/>
</dbReference>
<dbReference type="PIR" id="B71266">
    <property type="entry name" value="B71266"/>
</dbReference>
<dbReference type="RefSeq" id="WP_010882336.1">
    <property type="nucleotide sequence ID" value="NC_021490.2"/>
</dbReference>
<dbReference type="SMR" id="O83863"/>
<dbReference type="IntAct" id="O83863">
    <property type="interactions" value="1"/>
</dbReference>
<dbReference type="STRING" id="243276.TP_0893"/>
<dbReference type="EnsemblBacteria" id="AAC65850">
    <property type="protein sequence ID" value="AAC65850"/>
    <property type="gene ID" value="TP_0893"/>
</dbReference>
<dbReference type="GeneID" id="93876647"/>
<dbReference type="KEGG" id="tpa:TP_0893"/>
<dbReference type="KEGG" id="tpw:TPANIC_0893"/>
<dbReference type="eggNOG" id="COG0779">
    <property type="taxonomic scope" value="Bacteria"/>
</dbReference>
<dbReference type="HOGENOM" id="CLU_070525_4_0_12"/>
<dbReference type="OrthoDB" id="361904at2"/>
<dbReference type="Proteomes" id="UP000000811">
    <property type="component" value="Chromosome"/>
</dbReference>
<dbReference type="GO" id="GO:0005737">
    <property type="term" value="C:cytoplasm"/>
    <property type="evidence" value="ECO:0007669"/>
    <property type="project" value="UniProtKB-SubCell"/>
</dbReference>
<dbReference type="GO" id="GO:0042274">
    <property type="term" value="P:ribosomal small subunit biogenesis"/>
    <property type="evidence" value="ECO:0007669"/>
    <property type="project" value="UniProtKB-UniRule"/>
</dbReference>
<dbReference type="Gene3D" id="3.30.300.70">
    <property type="entry name" value="RimP-like superfamily, N-terminal"/>
    <property type="match status" value="1"/>
</dbReference>
<dbReference type="HAMAP" id="MF_01077">
    <property type="entry name" value="RimP"/>
    <property type="match status" value="1"/>
</dbReference>
<dbReference type="InterPro" id="IPR003728">
    <property type="entry name" value="Ribosome_maturation_RimP"/>
</dbReference>
<dbReference type="InterPro" id="IPR028998">
    <property type="entry name" value="RimP_C"/>
</dbReference>
<dbReference type="InterPro" id="IPR028989">
    <property type="entry name" value="RimP_N"/>
</dbReference>
<dbReference type="InterPro" id="IPR035956">
    <property type="entry name" value="RimP_N_sf"/>
</dbReference>
<dbReference type="NCBIfam" id="NF011230">
    <property type="entry name" value="PRK14637.1"/>
    <property type="match status" value="1"/>
</dbReference>
<dbReference type="Pfam" id="PF17384">
    <property type="entry name" value="DUF150_C"/>
    <property type="match status" value="1"/>
</dbReference>
<dbReference type="Pfam" id="PF02576">
    <property type="entry name" value="RimP_N"/>
    <property type="match status" value="1"/>
</dbReference>
<dbReference type="SUPFAM" id="SSF75420">
    <property type="entry name" value="YhbC-like, N-terminal domain"/>
    <property type="match status" value="1"/>
</dbReference>
<accession>O83863</accession>
<reference key="1">
    <citation type="journal article" date="1998" name="Science">
        <title>Complete genome sequence of Treponema pallidum, the syphilis spirochete.</title>
        <authorList>
            <person name="Fraser C.M."/>
            <person name="Norris S.J."/>
            <person name="Weinstock G.M."/>
            <person name="White O."/>
            <person name="Sutton G.G."/>
            <person name="Dodson R.J."/>
            <person name="Gwinn M.L."/>
            <person name="Hickey E.K."/>
            <person name="Clayton R.A."/>
            <person name="Ketchum K.A."/>
            <person name="Sodergren E."/>
            <person name="Hardham J.M."/>
            <person name="McLeod M.P."/>
            <person name="Salzberg S.L."/>
            <person name="Peterson J.D."/>
            <person name="Khalak H.G."/>
            <person name="Richardson D.L."/>
            <person name="Howell J.K."/>
            <person name="Chidambaram M."/>
            <person name="Utterback T.R."/>
            <person name="McDonald L.A."/>
            <person name="Artiach P."/>
            <person name="Bowman C."/>
            <person name="Cotton M.D."/>
            <person name="Fujii C."/>
            <person name="Garland S.A."/>
            <person name="Hatch B."/>
            <person name="Horst K."/>
            <person name="Roberts K.M."/>
            <person name="Sandusky M."/>
            <person name="Weidman J.F."/>
            <person name="Smith H.O."/>
            <person name="Venter J.C."/>
        </authorList>
    </citation>
    <scope>NUCLEOTIDE SEQUENCE [LARGE SCALE GENOMIC DNA]</scope>
    <source>
        <strain>Nichols</strain>
    </source>
</reference>
<feature type="chain" id="PRO_0000181948" description="Ribosome maturation factor RimP">
    <location>
        <begin position="1"/>
        <end position="156"/>
    </location>
</feature>
<sequence length="156" mass="16707">MNFSPNTLGSFESCAEVVRSLGCALVDLQWSVSAVSRRVQQAQGRARAVIYSAGGVTLDVCARVHRILVPRLQALGGVRTVFLEVGSPGERVIRNAAEFSIFLGETVKVWFCTGQFQVGTLAFADETCLTLTAGGVPVTIPYVQLTKAQLHPAVRA</sequence>